<protein>
    <recommendedName>
        <fullName>U4-theraphotoxin-Hhn1t</fullName>
        <shortName>U4-TRTX-Hhn1t</shortName>
    </recommendedName>
    <alternativeName>
        <fullName>Hainantoxin-II-28</fullName>
        <shortName>HNTX-II-28</shortName>
    </alternativeName>
</protein>
<dbReference type="EMBL" id="GU293080">
    <property type="protein sequence ID" value="ADB56896.1"/>
    <property type="molecule type" value="Genomic_DNA"/>
</dbReference>
<dbReference type="SMR" id="D2Y2K3"/>
<dbReference type="ArachnoServer" id="AS001593">
    <property type="toxin name" value="U4-theraphotoxin-Hhn1t"/>
</dbReference>
<dbReference type="GO" id="GO:0005576">
    <property type="term" value="C:extracellular region"/>
    <property type="evidence" value="ECO:0007669"/>
    <property type="project" value="UniProtKB-SubCell"/>
</dbReference>
<dbReference type="GO" id="GO:0035792">
    <property type="term" value="C:host cell postsynaptic membrane"/>
    <property type="evidence" value="ECO:0007669"/>
    <property type="project" value="UniProtKB-KW"/>
</dbReference>
<dbReference type="GO" id="GO:0090729">
    <property type="term" value="F:toxin activity"/>
    <property type="evidence" value="ECO:0007669"/>
    <property type="project" value="UniProtKB-KW"/>
</dbReference>
<dbReference type="InterPro" id="IPR012625">
    <property type="entry name" value="Hwtx-2-like"/>
</dbReference>
<dbReference type="Pfam" id="PF08089">
    <property type="entry name" value="Toxin_20"/>
    <property type="match status" value="1"/>
</dbReference>
<dbReference type="SUPFAM" id="SSF57059">
    <property type="entry name" value="omega toxin-like"/>
    <property type="match status" value="1"/>
</dbReference>
<dbReference type="PROSITE" id="PS60022">
    <property type="entry name" value="HWTX_2"/>
    <property type="match status" value="1"/>
</dbReference>
<comment type="function">
    <text evidence="1">Postsynaptic neurotoxin.</text>
</comment>
<comment type="subcellular location">
    <subcellularLocation>
        <location evidence="1">Secreted</location>
    </subcellularLocation>
</comment>
<comment type="tissue specificity">
    <text>Expressed by the venom gland.</text>
</comment>
<comment type="similarity">
    <text evidence="3">Belongs to the neurotoxin 12 (Hwtx-2) family. 02 (Hwtx-2) subfamily.</text>
</comment>
<reference key="1">
    <citation type="journal article" date="2010" name="J. Proteome Res.">
        <title>Molecular diversification of peptide toxins from the tarantula Haplopelma hainanum (Ornithoctonus hainana) venom based on transcriptomic, peptidomic, and genomic analyses.</title>
        <authorList>
            <person name="Tang X."/>
            <person name="Zhang Y."/>
            <person name="Hu W."/>
            <person name="Xu D."/>
            <person name="Tao H."/>
            <person name="Yang X."/>
            <person name="Li Y."/>
            <person name="Jiang L."/>
            <person name="Liang S."/>
        </authorList>
    </citation>
    <scope>NUCLEOTIDE SEQUENCE [LARGE SCALE GENOMIC DNA]</scope>
    <source>
        <tissue>Venom gland</tissue>
    </source>
</reference>
<sequence length="85" mass="9399">MKVTLIAILTCAAVLVLHTTAAEELEAESQLMEVGMPDTELAAVDEERLFECSVSCEIEKEGNEDCKKKKCKGGWKCKFNMCVKV</sequence>
<accession>D2Y2K3</accession>
<organism>
    <name type="scientific">Cyriopagopus hainanus</name>
    <name type="common">Chinese bird spider</name>
    <name type="synonym">Haplopelma hainanum</name>
    <dbReference type="NCBI Taxonomy" id="209901"/>
    <lineage>
        <taxon>Eukaryota</taxon>
        <taxon>Metazoa</taxon>
        <taxon>Ecdysozoa</taxon>
        <taxon>Arthropoda</taxon>
        <taxon>Chelicerata</taxon>
        <taxon>Arachnida</taxon>
        <taxon>Araneae</taxon>
        <taxon>Mygalomorphae</taxon>
        <taxon>Theraphosidae</taxon>
        <taxon>Haplopelma</taxon>
    </lineage>
</organism>
<evidence type="ECO:0000250" key="1"/>
<evidence type="ECO:0000255" key="2"/>
<evidence type="ECO:0000305" key="3"/>
<name>H2AB1_CYRHA</name>
<keyword id="KW-1015">Disulfide bond</keyword>
<keyword id="KW-0528">Neurotoxin</keyword>
<keyword id="KW-0629">Postsynaptic neurotoxin</keyword>
<keyword id="KW-0964">Secreted</keyword>
<keyword id="KW-0732">Signal</keyword>
<keyword id="KW-0800">Toxin</keyword>
<proteinExistence type="inferred from homology"/>
<feature type="signal peptide" evidence="2">
    <location>
        <begin position="1"/>
        <end position="22"/>
    </location>
</feature>
<feature type="propeptide" id="PRO_0000400823" evidence="1">
    <location>
        <begin position="23"/>
        <end position="48"/>
    </location>
</feature>
<feature type="peptide" id="PRO_0000400824" description="U4-theraphotoxin-Hhn1t">
    <location>
        <begin position="49"/>
        <end position="85"/>
    </location>
</feature>
<feature type="disulfide bond" evidence="1">
    <location>
        <begin position="52"/>
        <end position="66"/>
    </location>
</feature>
<feature type="disulfide bond" evidence="1">
    <location>
        <begin position="56"/>
        <end position="77"/>
    </location>
</feature>
<feature type="disulfide bond" evidence="1">
    <location>
        <begin position="71"/>
        <end position="82"/>
    </location>
</feature>